<protein>
    <recommendedName>
        <fullName evidence="1">Proteasome subunit beta</fullName>
        <ecNumber evidence="1">3.4.25.1</ecNumber>
    </recommendedName>
    <alternativeName>
        <fullName evidence="1">20S proteasome beta subunit</fullName>
    </alternativeName>
    <alternativeName>
        <fullName evidence="1">Proteasome core protein PrcB</fullName>
    </alternativeName>
</protein>
<proteinExistence type="inferred from homology"/>
<reference key="1">
    <citation type="journal article" date="2009" name="Stand. Genomic Sci.">
        <title>Complete genome sequence of Sanguibacter keddieii type strain (ST-74).</title>
        <authorList>
            <person name="Ivanova N."/>
            <person name="Sikorski J."/>
            <person name="Sims D."/>
            <person name="Brettin T."/>
            <person name="Detter J.C."/>
            <person name="Han C."/>
            <person name="Lapidus A."/>
            <person name="Copeland A."/>
            <person name="Glavina Del Rio T."/>
            <person name="Nolan M."/>
            <person name="Chen F."/>
            <person name="Lucas S."/>
            <person name="Tice H."/>
            <person name="Cheng J.F."/>
            <person name="Bruce D."/>
            <person name="Goodwin L."/>
            <person name="Pitluck S."/>
            <person name="Pati A."/>
            <person name="Mavromatis K."/>
            <person name="Chen A."/>
            <person name="Palaniappan K."/>
            <person name="D'haeseleer P."/>
            <person name="Chain P."/>
            <person name="Bristow J."/>
            <person name="Eisen J.A."/>
            <person name="Markowitz V."/>
            <person name="Hugenholtz P."/>
            <person name="Goker M."/>
            <person name="Pukall R."/>
            <person name="Klenk H.P."/>
            <person name="Kyrpides N.C."/>
        </authorList>
    </citation>
    <scope>NUCLEOTIDE SEQUENCE [LARGE SCALE GENOMIC DNA]</scope>
    <source>
        <strain>ATCC 51767 / DSM 10542 / NCFB 3025 / ST-74</strain>
    </source>
</reference>
<keyword id="KW-0068">Autocatalytic cleavage</keyword>
<keyword id="KW-0963">Cytoplasm</keyword>
<keyword id="KW-0378">Hydrolase</keyword>
<keyword id="KW-0645">Protease</keyword>
<keyword id="KW-0647">Proteasome</keyword>
<keyword id="KW-0888">Threonine protease</keyword>
<keyword id="KW-0865">Zymogen</keyword>
<gene>
    <name evidence="1" type="primary">prcB</name>
    <name type="ordered locus">Sked_20870</name>
</gene>
<dbReference type="EC" id="3.4.25.1" evidence="1"/>
<dbReference type="EMBL" id="CP001819">
    <property type="protein sequence ID" value="ACZ22009.1"/>
    <property type="molecule type" value="Genomic_DNA"/>
</dbReference>
<dbReference type="RefSeq" id="WP_012867078.1">
    <property type="nucleotide sequence ID" value="NC_013521.1"/>
</dbReference>
<dbReference type="SMR" id="D1BHT9"/>
<dbReference type="STRING" id="446469.Sked_20870"/>
<dbReference type="MEROPS" id="T01.005"/>
<dbReference type="KEGG" id="ske:Sked_20870"/>
<dbReference type="eggNOG" id="COG0638">
    <property type="taxonomic scope" value="Bacteria"/>
</dbReference>
<dbReference type="HOGENOM" id="CLU_035750_2_0_11"/>
<dbReference type="OrthoDB" id="5174038at2"/>
<dbReference type="UniPathway" id="UPA00997"/>
<dbReference type="Proteomes" id="UP000000322">
    <property type="component" value="Chromosome"/>
</dbReference>
<dbReference type="GO" id="GO:0005737">
    <property type="term" value="C:cytoplasm"/>
    <property type="evidence" value="ECO:0007669"/>
    <property type="project" value="UniProtKB-SubCell"/>
</dbReference>
<dbReference type="GO" id="GO:0019774">
    <property type="term" value="C:proteasome core complex, beta-subunit complex"/>
    <property type="evidence" value="ECO:0007669"/>
    <property type="project" value="UniProtKB-UniRule"/>
</dbReference>
<dbReference type="GO" id="GO:0004298">
    <property type="term" value="F:threonine-type endopeptidase activity"/>
    <property type="evidence" value="ECO:0007669"/>
    <property type="project" value="UniProtKB-UniRule"/>
</dbReference>
<dbReference type="GO" id="GO:0019941">
    <property type="term" value="P:modification-dependent protein catabolic process"/>
    <property type="evidence" value="ECO:0007669"/>
    <property type="project" value="UniProtKB-UniRule"/>
</dbReference>
<dbReference type="GO" id="GO:0010498">
    <property type="term" value="P:proteasomal protein catabolic process"/>
    <property type="evidence" value="ECO:0007669"/>
    <property type="project" value="UniProtKB-UniRule"/>
</dbReference>
<dbReference type="CDD" id="cd01906">
    <property type="entry name" value="proteasome_protease_HslV"/>
    <property type="match status" value="1"/>
</dbReference>
<dbReference type="Gene3D" id="3.60.20.10">
    <property type="entry name" value="Glutamine Phosphoribosylpyrophosphate, subunit 1, domain 1"/>
    <property type="match status" value="1"/>
</dbReference>
<dbReference type="HAMAP" id="MF_02113_B">
    <property type="entry name" value="Proteasome_B_B"/>
    <property type="match status" value="1"/>
</dbReference>
<dbReference type="InterPro" id="IPR029055">
    <property type="entry name" value="Ntn_hydrolases_N"/>
</dbReference>
<dbReference type="InterPro" id="IPR000243">
    <property type="entry name" value="Pept_T1A_subB"/>
</dbReference>
<dbReference type="InterPro" id="IPR001353">
    <property type="entry name" value="Proteasome_sua/b"/>
</dbReference>
<dbReference type="InterPro" id="IPR023333">
    <property type="entry name" value="Proteasome_suB-type"/>
</dbReference>
<dbReference type="InterPro" id="IPR022483">
    <property type="entry name" value="PSB_actinobac"/>
</dbReference>
<dbReference type="NCBIfam" id="TIGR03690">
    <property type="entry name" value="20S_bact_beta"/>
    <property type="match status" value="1"/>
</dbReference>
<dbReference type="PANTHER" id="PTHR32194:SF0">
    <property type="entry name" value="ATP-DEPENDENT PROTEASE SUBUNIT HSLV"/>
    <property type="match status" value="1"/>
</dbReference>
<dbReference type="PANTHER" id="PTHR32194">
    <property type="entry name" value="METALLOPROTEASE TLDD"/>
    <property type="match status" value="1"/>
</dbReference>
<dbReference type="Pfam" id="PF00227">
    <property type="entry name" value="Proteasome"/>
    <property type="match status" value="1"/>
</dbReference>
<dbReference type="PRINTS" id="PR00141">
    <property type="entry name" value="PROTEASOME"/>
</dbReference>
<dbReference type="SUPFAM" id="SSF56235">
    <property type="entry name" value="N-terminal nucleophile aminohydrolases (Ntn hydrolases)"/>
    <property type="match status" value="1"/>
</dbReference>
<dbReference type="PROSITE" id="PS51476">
    <property type="entry name" value="PROTEASOME_BETA_2"/>
    <property type="match status" value="1"/>
</dbReference>
<organism>
    <name type="scientific">Sanguibacter keddieii (strain ATCC 51767 / DSM 10542 / NCFB 3025 / ST-74)</name>
    <dbReference type="NCBI Taxonomy" id="446469"/>
    <lineage>
        <taxon>Bacteria</taxon>
        <taxon>Bacillati</taxon>
        <taxon>Actinomycetota</taxon>
        <taxon>Actinomycetes</taxon>
        <taxon>Micrococcales</taxon>
        <taxon>Sanguibacteraceae</taxon>
        <taxon>Sanguibacter</taxon>
    </lineage>
</organism>
<accession>D1BHT9</accession>
<feature type="propeptide" id="PRO_0000397580" description="Removed in mature form; by autocatalysis" evidence="1">
    <location>
        <begin position="1"/>
        <end position="50"/>
    </location>
</feature>
<feature type="chain" id="PRO_0000397581" description="Proteasome subunit beta">
    <location>
        <begin position="51"/>
        <end position="285"/>
    </location>
</feature>
<feature type="region of interest" description="Disordered" evidence="2">
    <location>
        <begin position="266"/>
        <end position="285"/>
    </location>
</feature>
<feature type="active site" description="Nucleophile" evidence="1">
    <location>
        <position position="51"/>
    </location>
</feature>
<comment type="function">
    <text evidence="1">Component of the proteasome core, a large protease complex with broad specificity involved in protein degradation.</text>
</comment>
<comment type="catalytic activity">
    <reaction evidence="1">
        <text>Cleavage of peptide bonds with very broad specificity.</text>
        <dbReference type="EC" id="3.4.25.1"/>
    </reaction>
</comment>
<comment type="activity regulation">
    <text evidence="1">The formation of the proteasomal ATPase ARC-20S proteasome complex, likely via the docking of the C-termini of ARC into the intersubunit pockets in the alpha-rings, may trigger opening of the gate for substrate entry. Interconversion between the open-gate and close-gate conformations leads to a dynamic regulation of the 20S proteasome proteolysis activity.</text>
</comment>
<comment type="pathway">
    <text evidence="1">Protein degradation; proteasomal Pup-dependent pathway.</text>
</comment>
<comment type="subunit">
    <text evidence="1">The 20S proteasome core is composed of 14 alpha and 14 beta subunits that assemble into four stacked heptameric rings, resulting in a barrel-shaped structure. The two inner rings, each composed of seven catalytic beta subunits, are sandwiched by two outer rings, each composed of seven alpha subunits. The catalytic chamber with the active sites is on the inside of the barrel. Has a gated structure, the ends of the cylinder being occluded by the N-termini of the alpha-subunits. Is capped by the proteasome-associated ATPase, ARC.</text>
</comment>
<comment type="subcellular location">
    <subcellularLocation>
        <location evidence="1">Cytoplasm</location>
    </subcellularLocation>
</comment>
<comment type="similarity">
    <text evidence="1">Belongs to the peptidase T1B family.</text>
</comment>
<sequence length="285" mass="30175">MTAEHPARLPQAFMTPGSSSFVDFLAAHDPSLLPSSRALPAGSAPPAPHGTTIVAATFDGGVVVAGDRRATSGSMIAHREIEKVFAADEFSAVGIAGTAGLALELVRLFQLELEHYEKIEGTLLSLDGKANRLSTMIRGNLGLAMQGLAVVPLFAGFDLVERRGRIFSYDVTGGRYEELDHHSVGSGSVFARGALKKLWRPGLDAEAAVRVVVEALFDAADDDSATGGPDAVRQIWPVVATVSEAGYLRQGDDALESVVEDISLERTRQARSSRSRHGSLGGDLR</sequence>
<evidence type="ECO:0000255" key="1">
    <source>
        <dbReference type="HAMAP-Rule" id="MF_02113"/>
    </source>
</evidence>
<evidence type="ECO:0000256" key="2">
    <source>
        <dbReference type="SAM" id="MobiDB-lite"/>
    </source>
</evidence>
<name>PSB_SANKS</name>